<proteinExistence type="inferred from homology"/>
<sequence>MTQFITHKWLAALGLASSIAAFPALAAKDVVVAVGSNFTTLDPYDANDTLSQAVAKSFYQGLFGLDKDMKVKNVLAEGYTVSDDGLTYTITLRQGVKFQDGADFNAAAVKANLDRASNPDNHLKRYNLYKNIAKTEVVDPATVKITLKQPFSAFINILAHPATAMISPQALEKYGKDIGFHPVGTGPYQLETWNQTDFVKVKKFAGYWQQGLPKLDSITWRPVTDNNTRAAMLQTGEAQFAFPIPYEQAALLAKNKNLELVASPSIMQRYISMNVTQKPFDNPKVREALNYAINRQALVKVAFAGYATPATGVVPPSIAYAQSYQPWPYDPAKARELLKEAGYPDGFSTTLWSSHNHSTAQKVLQFTQQQLAQIGVKARITAMDAGQRAAEVEGKGQKESGVRMFYTGWSASTGEADWALSPLFASQNWPPTQFNTAFYSNKQVDSDLAAALKTNDPQEKTRLYKEAQDIIWKESPWIPLVVEKLVSAHSKNLTGFWIMPDTGFSFDDADLK</sequence>
<organism>
    <name type="scientific">Salmonella typhimurium (strain LT2 / SGSC1412 / ATCC 700720)</name>
    <dbReference type="NCBI Taxonomy" id="99287"/>
    <lineage>
        <taxon>Bacteria</taxon>
        <taxon>Pseudomonadati</taxon>
        <taxon>Pseudomonadota</taxon>
        <taxon>Gammaproteobacteria</taxon>
        <taxon>Enterobacterales</taxon>
        <taxon>Enterobacteriaceae</taxon>
        <taxon>Salmonella</taxon>
    </lineage>
</organism>
<feature type="signal peptide" evidence="2">
    <location>
        <begin position="1"/>
        <end position="26"/>
    </location>
</feature>
<feature type="chain" id="PRO_0000279981" description="Glutathione-binding protein GsiB">
    <location>
        <begin position="27"/>
        <end position="512"/>
    </location>
</feature>
<protein>
    <recommendedName>
        <fullName evidence="1">Glutathione-binding protein GsiB</fullName>
    </recommendedName>
</protein>
<comment type="function">
    <text evidence="1">Part of the ABC transporter complex GsiABCD involved in glutathione import. Binds glutathione.</text>
</comment>
<comment type="subunit">
    <text evidence="1">The complex is composed of two ATP-binding proteins (GsiA), two transmembrane proteins (GsiC and GsiD) and a solute-binding protein (GsiB).</text>
</comment>
<comment type="subcellular location">
    <subcellularLocation>
        <location evidence="1">Periplasm</location>
    </subcellularLocation>
</comment>
<comment type="similarity">
    <text evidence="3">Belongs to the bacterial solute-binding protein 5 family.</text>
</comment>
<gene>
    <name evidence="1" type="primary">gsiB</name>
    <name type="ordered locus">STM0849</name>
</gene>
<evidence type="ECO:0000250" key="1">
    <source>
        <dbReference type="UniProtKB" id="P75797"/>
    </source>
</evidence>
<evidence type="ECO:0000255" key="2"/>
<evidence type="ECO:0000305" key="3"/>
<name>GSIB_SALTY</name>
<accession>Q8ZQM3</accession>
<keyword id="KW-0574">Periplasm</keyword>
<keyword id="KW-1185">Reference proteome</keyword>
<keyword id="KW-0732">Signal</keyword>
<keyword id="KW-0813">Transport</keyword>
<reference key="1">
    <citation type="journal article" date="2001" name="Nature">
        <title>Complete genome sequence of Salmonella enterica serovar Typhimurium LT2.</title>
        <authorList>
            <person name="McClelland M."/>
            <person name="Sanderson K.E."/>
            <person name="Spieth J."/>
            <person name="Clifton S.W."/>
            <person name="Latreille P."/>
            <person name="Courtney L."/>
            <person name="Porwollik S."/>
            <person name="Ali J."/>
            <person name="Dante M."/>
            <person name="Du F."/>
            <person name="Hou S."/>
            <person name="Layman D."/>
            <person name="Leonard S."/>
            <person name="Nguyen C."/>
            <person name="Scott K."/>
            <person name="Holmes A."/>
            <person name="Grewal N."/>
            <person name="Mulvaney E."/>
            <person name="Ryan E."/>
            <person name="Sun H."/>
            <person name="Florea L."/>
            <person name="Miller W."/>
            <person name="Stoneking T."/>
            <person name="Nhan M."/>
            <person name="Waterston R."/>
            <person name="Wilson R.K."/>
        </authorList>
    </citation>
    <scope>NUCLEOTIDE SEQUENCE [LARGE SCALE GENOMIC DNA]</scope>
    <source>
        <strain>LT2 / SGSC1412 / ATCC 700720</strain>
    </source>
</reference>
<dbReference type="EMBL" id="AE006468">
    <property type="protein sequence ID" value="AAL19785.1"/>
    <property type="molecule type" value="Genomic_DNA"/>
</dbReference>
<dbReference type="RefSeq" id="WP_000191434.1">
    <property type="nucleotide sequence ID" value="NC_003197.2"/>
</dbReference>
<dbReference type="SMR" id="Q8ZQM3"/>
<dbReference type="STRING" id="99287.STM0849"/>
<dbReference type="PaxDb" id="99287-STM0849"/>
<dbReference type="KEGG" id="stm:STM0849"/>
<dbReference type="PATRIC" id="fig|99287.12.peg.886"/>
<dbReference type="HOGENOM" id="CLU_017028_7_3_6"/>
<dbReference type="OMA" id="WKESPWV"/>
<dbReference type="PhylomeDB" id="Q8ZQM3"/>
<dbReference type="BioCyc" id="SENT99287:STM0849-MONOMER"/>
<dbReference type="Proteomes" id="UP000001014">
    <property type="component" value="Chromosome"/>
</dbReference>
<dbReference type="GO" id="GO:0043190">
    <property type="term" value="C:ATP-binding cassette (ABC) transporter complex"/>
    <property type="evidence" value="ECO:0007669"/>
    <property type="project" value="InterPro"/>
</dbReference>
<dbReference type="GO" id="GO:0030288">
    <property type="term" value="C:outer membrane-bounded periplasmic space"/>
    <property type="evidence" value="ECO:0000318"/>
    <property type="project" value="GO_Central"/>
</dbReference>
<dbReference type="GO" id="GO:1904680">
    <property type="term" value="F:peptide transmembrane transporter activity"/>
    <property type="evidence" value="ECO:0000318"/>
    <property type="project" value="GO_Central"/>
</dbReference>
<dbReference type="GO" id="GO:0042938">
    <property type="term" value="P:dipeptide transport"/>
    <property type="evidence" value="ECO:0000318"/>
    <property type="project" value="GO_Central"/>
</dbReference>
<dbReference type="CDD" id="cd08499">
    <property type="entry name" value="PBP2_Ylib_like"/>
    <property type="match status" value="1"/>
</dbReference>
<dbReference type="FunFam" id="3.10.105.10:FF:000003">
    <property type="entry name" value="Glutathione ABC transporter substrate-binding protein GsiB"/>
    <property type="match status" value="1"/>
</dbReference>
<dbReference type="FunFam" id="3.40.190.10:FF:000094">
    <property type="entry name" value="Glutathione ABC transporter substrate-binding protein GsiB"/>
    <property type="match status" value="1"/>
</dbReference>
<dbReference type="FunFam" id="3.90.76.10:FF:000003">
    <property type="entry name" value="Glutathione ABC transporter substrate-binding protein GsiB"/>
    <property type="match status" value="1"/>
</dbReference>
<dbReference type="Gene3D" id="3.90.76.10">
    <property type="entry name" value="Dipeptide-binding Protein, Domain 1"/>
    <property type="match status" value="1"/>
</dbReference>
<dbReference type="Gene3D" id="3.10.105.10">
    <property type="entry name" value="Dipeptide-binding Protein, Domain 3"/>
    <property type="match status" value="1"/>
</dbReference>
<dbReference type="Gene3D" id="3.40.190.10">
    <property type="entry name" value="Periplasmic binding protein-like II"/>
    <property type="match status" value="1"/>
</dbReference>
<dbReference type="InterPro" id="IPR030678">
    <property type="entry name" value="Peptide/Ni-bd"/>
</dbReference>
<dbReference type="InterPro" id="IPR039424">
    <property type="entry name" value="SBP_5"/>
</dbReference>
<dbReference type="InterPro" id="IPR000914">
    <property type="entry name" value="SBP_5_dom"/>
</dbReference>
<dbReference type="NCBIfam" id="NF011942">
    <property type="entry name" value="PRK15413.1"/>
    <property type="match status" value="1"/>
</dbReference>
<dbReference type="PANTHER" id="PTHR30290:SF32">
    <property type="entry name" value="GLUTATHIONE-BINDING PROTEIN GSIB"/>
    <property type="match status" value="1"/>
</dbReference>
<dbReference type="PANTHER" id="PTHR30290">
    <property type="entry name" value="PERIPLASMIC BINDING COMPONENT OF ABC TRANSPORTER"/>
    <property type="match status" value="1"/>
</dbReference>
<dbReference type="Pfam" id="PF00496">
    <property type="entry name" value="SBP_bac_5"/>
    <property type="match status" value="1"/>
</dbReference>
<dbReference type="PIRSF" id="PIRSF002741">
    <property type="entry name" value="MppA"/>
    <property type="match status" value="1"/>
</dbReference>
<dbReference type="SUPFAM" id="SSF53850">
    <property type="entry name" value="Periplasmic binding protein-like II"/>
    <property type="match status" value="1"/>
</dbReference>